<sequence>MSRRSTTTSTNFGLSWSLVDVISSSTAVFKVPMNGGCDLWIGCARWLRDMKVLTTDKNGTMLEFASVLRDGILLCRLANTLVPNGIDQKKIMRTNQPSPFLCCNNINYFAMFCKTYFNLEDADLFTAEDLYYMNGFQKVLKTLSFLSHTKESLSRGVDPFPDTDNNQEGTSNGSEFEDDVEIYQSLHDNIENVDPNRTIYGPITSADPEEQQSEQLYDRIVTNRKPSMNENDLQNTPTLKRNRCIRELYDTEKNYVAQALVTIIKTFYEPLKGIIPTSDYNIIFGNIEEINVLHTALLADLEYPVKVALGLSDATPPRPISLNECVPQTIGEVFIKYRDQFLAYGKYCSNLPDSRKLSNELLKTNEFISRNINELTAQGNCKFGMNDLLCVPFQRLTKYPLLLKELQKKTDLASPDRKSLEEAVEVMEDVCNYINEESRDTNAIKVIDEIEQSITDLSMPLNVKLHDYGRVNLDGEVKMAESTLTQAGKPKQRYIFLFDKVIVVCKAANKVMAAKTTGASARTNTFTYKNAYVMSELTIDKNASLDVKSGGTITRRTQYVIIMTRDRNENNEITQLTFYFKNEATRNNWMTALLLSKSNVSPTDYLRDTNHKVAFHSFRVDVKNPATCDVCDKLMKGLQYQGYKCESCNMSMHKECLGLKKCEAVRKSTHETRSSQSFNCNRPRFHIHEGDIVVANSNSTPSDLSYLQFAKGDRIEVIKMQGHNRFTGCLINNRNRTGLVHLDHVSQSRTTSMIGLSPIDSPAGSIAPRVVRNESTVLPNKLLSDGSSRSLSGPHGSRSSRNSSSSTINGSMDSVPRQQDYVNTEISEFLWYMGEMERAKAESTLKGTPNGTFLVRYSKNRKQTAISLSYKNDVKHMIIEQNSDGKVYLDEDYIFNSTVELVQYYRSNNLIEIFAALDTCLKNPYSQCKVFKAVHDYDAPSPNNEGKFLSFKTGDIVVLLDTVGEDRGWWKGQVNNKSGFFPLSYVKPYDPATEGSSSPVTPTSSSS</sequence>
<gene>
    <name evidence="12" type="primary">vav-1</name>
    <name evidence="12" type="ORF">C35B8.2</name>
</gene>
<proteinExistence type="evidence at protein level"/>
<accession>Q45FX5</accession>
<accession>Q18479</accession>
<name>VAV_CAEEL</name>
<organism>
    <name type="scientific">Caenorhabditis elegans</name>
    <dbReference type="NCBI Taxonomy" id="6239"/>
    <lineage>
        <taxon>Eukaryota</taxon>
        <taxon>Metazoa</taxon>
        <taxon>Ecdysozoa</taxon>
        <taxon>Nematoda</taxon>
        <taxon>Chromadorea</taxon>
        <taxon>Rhabditida</taxon>
        <taxon>Rhabditina</taxon>
        <taxon>Rhabditomorpha</taxon>
        <taxon>Rhabditoidea</taxon>
        <taxon>Rhabditidae</taxon>
        <taxon>Peloderinae</taxon>
        <taxon>Caenorhabditis</taxon>
    </lineage>
</organism>
<feature type="chain" id="PRO_0000238786" description="Protein vav-1">
    <location>
        <begin position="1"/>
        <end position="1007"/>
    </location>
</feature>
<feature type="domain" description="Calponin-homology (CH)" evidence="2">
    <location>
        <begin position="37"/>
        <end position="151"/>
    </location>
</feature>
<feature type="domain" description="DH" evidence="3">
    <location>
        <begin position="240"/>
        <end position="437"/>
    </location>
</feature>
<feature type="domain" description="PH" evidence="4">
    <location>
        <begin position="470"/>
        <end position="598"/>
    </location>
</feature>
<feature type="domain" description="SH3 1" evidence="6">
    <location>
        <begin position="688"/>
        <end position="750"/>
    </location>
</feature>
<feature type="domain" description="SH2" evidence="5">
    <location>
        <begin position="831"/>
        <end position="925"/>
    </location>
</feature>
<feature type="domain" description="SH3 2" evidence="6">
    <location>
        <begin position="926"/>
        <end position="991"/>
    </location>
</feature>
<feature type="zinc finger region" description="Phorbol-ester/DAG-type" evidence="7">
    <location>
        <begin position="610"/>
        <end position="664"/>
    </location>
</feature>
<feature type="region of interest" description="AC">
    <location>
        <begin position="151"/>
        <end position="239"/>
    </location>
</feature>
<feature type="region of interest" description="Disordered" evidence="8">
    <location>
        <begin position="153"/>
        <end position="176"/>
    </location>
</feature>
<feature type="region of interest" description="Disordered" evidence="8">
    <location>
        <begin position="778"/>
        <end position="817"/>
    </location>
</feature>
<feature type="compositionally biased region" description="Polar residues" evidence="8">
    <location>
        <begin position="163"/>
        <end position="174"/>
    </location>
</feature>
<feature type="compositionally biased region" description="Low complexity" evidence="8">
    <location>
        <begin position="782"/>
        <end position="814"/>
    </location>
</feature>
<feature type="modified residue" description="Phosphotyrosine" evidence="1">
    <location>
        <position position="183"/>
    </location>
</feature>
<feature type="modified residue" description="Phosphotyrosine" evidence="1">
    <location>
        <position position="200"/>
    </location>
</feature>
<feature type="modified residue" description="Phosphotyrosine" evidence="1">
    <location>
        <position position="217"/>
    </location>
</feature>
<feature type="splice variant" id="VSP_018992" description="In isoform b." evidence="11">
    <location>
        <begin position="1"/>
        <end position="32"/>
    </location>
</feature>
<feature type="mutagenesis site" description="Leads to a dominant hypercontracted and uncoordinated phenotype; when associated with Y-200 and Y-217." evidence="9">
    <original>Y</original>
    <variation>F</variation>
    <location>
        <position position="183"/>
    </location>
</feature>
<feature type="mutagenesis site" description="Leads to a dominant hypercontracted and uncoordinated phenotype; when associated with Y-183 and Y-217." evidence="9">
    <original>Y</original>
    <variation>F</variation>
    <location>
        <position position="200"/>
    </location>
</feature>
<feature type="mutagenesis site" description="Leads to a dominant hypercontracted and uncoordinated phenotype. Leads to a dominant hypercontracted and uncoordinated phenotype; when associated with Y-183 and Y-200." evidence="9">
    <original>Y</original>
    <variation>F</variation>
    <location>
        <position position="217"/>
    </location>
</feature>
<evidence type="ECO:0000250" key="1"/>
<evidence type="ECO:0000255" key="2">
    <source>
        <dbReference type="PROSITE-ProRule" id="PRU00044"/>
    </source>
</evidence>
<evidence type="ECO:0000255" key="3">
    <source>
        <dbReference type="PROSITE-ProRule" id="PRU00062"/>
    </source>
</evidence>
<evidence type="ECO:0000255" key="4">
    <source>
        <dbReference type="PROSITE-ProRule" id="PRU00145"/>
    </source>
</evidence>
<evidence type="ECO:0000255" key="5">
    <source>
        <dbReference type="PROSITE-ProRule" id="PRU00191"/>
    </source>
</evidence>
<evidence type="ECO:0000255" key="6">
    <source>
        <dbReference type="PROSITE-ProRule" id="PRU00192"/>
    </source>
</evidence>
<evidence type="ECO:0000255" key="7">
    <source>
        <dbReference type="PROSITE-ProRule" id="PRU00226"/>
    </source>
</evidence>
<evidence type="ECO:0000256" key="8">
    <source>
        <dbReference type="SAM" id="MobiDB-lite"/>
    </source>
</evidence>
<evidence type="ECO:0000269" key="9">
    <source>
    </source>
</evidence>
<evidence type="ECO:0000269" key="10">
    <source>
    </source>
</evidence>
<evidence type="ECO:0000305" key="11"/>
<evidence type="ECO:0000312" key="12">
    <source>
        <dbReference type="WormBase" id="C35B8.2a"/>
    </source>
</evidence>
<evidence type="ECO:0000312" key="13">
    <source>
        <dbReference type="WormBase" id="C35B8.2b"/>
    </source>
</evidence>
<keyword id="KW-0025">Alternative splicing</keyword>
<keyword id="KW-0344">Guanine-nucleotide releasing factor</keyword>
<keyword id="KW-0479">Metal-binding</keyword>
<keyword id="KW-0597">Phosphoprotein</keyword>
<keyword id="KW-1185">Reference proteome</keyword>
<keyword id="KW-0677">Repeat</keyword>
<keyword id="KW-0727">SH2 domain</keyword>
<keyword id="KW-0728">SH3 domain</keyword>
<keyword id="KW-0862">Zinc</keyword>
<keyword id="KW-0863">Zinc-finger</keyword>
<dbReference type="EMBL" id="DQ136172">
    <property type="protein sequence ID" value="AAZ66767.1"/>
    <property type="molecule type" value="mRNA"/>
</dbReference>
<dbReference type="EMBL" id="BX284606">
    <property type="protein sequence ID" value="CCD66769.1"/>
    <property type="molecule type" value="Genomic_DNA"/>
</dbReference>
<dbReference type="EMBL" id="BX284606">
    <property type="protein sequence ID" value="CCD66770.1"/>
    <property type="molecule type" value="Genomic_DNA"/>
</dbReference>
<dbReference type="PIR" id="T15778">
    <property type="entry name" value="T15778"/>
</dbReference>
<dbReference type="RefSeq" id="NP_001041222.1">
    <molecule id="Q45FX5-2"/>
    <property type="nucleotide sequence ID" value="NM_001047757.3"/>
</dbReference>
<dbReference type="RefSeq" id="NP_001041223.1">
    <property type="nucleotide sequence ID" value="NM_001047758.1"/>
</dbReference>
<dbReference type="RefSeq" id="NP_001359918.1">
    <molecule id="Q45FX5-1"/>
    <property type="nucleotide sequence ID" value="NM_001373412.3"/>
</dbReference>
<dbReference type="SMR" id="Q45FX5"/>
<dbReference type="BioGRID" id="46070">
    <property type="interactions" value="34"/>
</dbReference>
<dbReference type="DIP" id="DIP-25959N"/>
<dbReference type="FunCoup" id="Q45FX5">
    <property type="interactions" value="1931"/>
</dbReference>
<dbReference type="IntAct" id="Q45FX5">
    <property type="interactions" value="27"/>
</dbReference>
<dbReference type="STRING" id="6239.C35B8.2b.1"/>
<dbReference type="iPTMnet" id="Q45FX5"/>
<dbReference type="PaxDb" id="6239-C35B8.2b"/>
<dbReference type="PeptideAtlas" id="Q45FX5"/>
<dbReference type="EnsemblMetazoa" id="C35B8.2a.1">
    <molecule id="Q45FX5-2"/>
    <property type="protein sequence ID" value="C35B8.2a.1"/>
    <property type="gene ID" value="WBGene00006887"/>
</dbReference>
<dbReference type="EnsemblMetazoa" id="C35B8.2b.1">
    <molecule id="Q45FX5-1"/>
    <property type="protein sequence ID" value="C35B8.2b.1"/>
    <property type="gene ID" value="WBGene00006887"/>
</dbReference>
<dbReference type="GeneID" id="181153"/>
<dbReference type="KEGG" id="cel:CELE_C35B8.2"/>
<dbReference type="UCSC" id="C35B8.2a.1">
    <molecule id="Q45FX5-1"/>
    <property type="organism name" value="c. elegans"/>
</dbReference>
<dbReference type="AGR" id="WB:WBGene00006887"/>
<dbReference type="CTD" id="181153"/>
<dbReference type="WormBase" id="C35B8.2a">
    <molecule id="Q45FX5-2"/>
    <property type="protein sequence ID" value="CE38040"/>
    <property type="gene ID" value="WBGene00006887"/>
    <property type="gene designation" value="vav-1"/>
</dbReference>
<dbReference type="WormBase" id="C35B8.2b">
    <molecule id="Q45FX5-1"/>
    <property type="protein sequence ID" value="CE39333"/>
    <property type="gene ID" value="WBGene00006887"/>
    <property type="gene designation" value="vav-1"/>
</dbReference>
<dbReference type="eggNOG" id="KOG2996">
    <property type="taxonomic scope" value="Eukaryota"/>
</dbReference>
<dbReference type="GeneTree" id="ENSGT00940000168738"/>
<dbReference type="HOGENOM" id="CLU_013787_0_0_1"/>
<dbReference type="InParanoid" id="Q45FX5"/>
<dbReference type="OMA" id="LELACIH"/>
<dbReference type="OrthoDB" id="5340910at2759"/>
<dbReference type="PhylomeDB" id="Q45FX5"/>
<dbReference type="Reactome" id="R-CEL-114604">
    <property type="pathway name" value="GPVI-mediated activation cascade"/>
</dbReference>
<dbReference type="Reactome" id="R-CEL-1433557">
    <property type="pathway name" value="Signaling by SCF-KIT"/>
</dbReference>
<dbReference type="Reactome" id="R-CEL-193648">
    <property type="pathway name" value="NRAGE signals death through JNK"/>
</dbReference>
<dbReference type="Reactome" id="R-CEL-3928665">
    <property type="pathway name" value="EPH-ephrin mediated repulsion of cells"/>
</dbReference>
<dbReference type="Reactome" id="R-CEL-416482">
    <property type="pathway name" value="G alpha (12/13) signalling events"/>
</dbReference>
<dbReference type="Reactome" id="R-CEL-4420097">
    <property type="pathway name" value="VEGFA-VEGFR2 Pathway"/>
</dbReference>
<dbReference type="Reactome" id="R-CEL-445144">
    <property type="pathway name" value="Signal transduction by L1"/>
</dbReference>
<dbReference type="Reactome" id="R-CEL-5218920">
    <property type="pathway name" value="VEGFR2 mediated vascular permeability"/>
</dbReference>
<dbReference type="Reactome" id="R-CEL-8980692">
    <property type="pathway name" value="RHOA GTPase cycle"/>
</dbReference>
<dbReference type="Reactome" id="R-CEL-9013026">
    <property type="pathway name" value="RHOB GTPase cycle"/>
</dbReference>
<dbReference type="Reactome" id="R-CEL-9013148">
    <property type="pathway name" value="CDC42 GTPase cycle"/>
</dbReference>
<dbReference type="Reactome" id="R-CEL-9013149">
    <property type="pathway name" value="RAC1 GTPase cycle"/>
</dbReference>
<dbReference type="Reactome" id="R-CEL-9013404">
    <property type="pathway name" value="RAC2 GTPase cycle"/>
</dbReference>
<dbReference type="Reactome" id="R-CEL-9013408">
    <property type="pathway name" value="RHOG GTPase cycle"/>
</dbReference>
<dbReference type="Reactome" id="R-CEL-9013423">
    <property type="pathway name" value="RAC3 GTPase cycle"/>
</dbReference>
<dbReference type="Reactome" id="R-CEL-912631">
    <property type="pathway name" value="Regulation of signaling by CBL"/>
</dbReference>
<dbReference type="Reactome" id="R-CEL-9748787">
    <property type="pathway name" value="Azathioprine ADME"/>
</dbReference>
<dbReference type="SignaLink" id="Q45FX5"/>
<dbReference type="PRO" id="PR:Q45FX5"/>
<dbReference type="Proteomes" id="UP000001940">
    <property type="component" value="Chromosome X"/>
</dbReference>
<dbReference type="Bgee" id="WBGene00006887">
    <property type="expression patterns" value="Expressed in pharyngeal muscle cell (C elegans) and 4 other cell types or tissues"/>
</dbReference>
<dbReference type="ExpressionAtlas" id="Q45FX5">
    <property type="expression patterns" value="baseline and differential"/>
</dbReference>
<dbReference type="GO" id="GO:0005737">
    <property type="term" value="C:cytoplasm"/>
    <property type="evidence" value="ECO:0000318"/>
    <property type="project" value="GO_Central"/>
</dbReference>
<dbReference type="GO" id="GO:0005085">
    <property type="term" value="F:guanyl-nucleotide exchange factor activity"/>
    <property type="evidence" value="ECO:0000318"/>
    <property type="project" value="GO_Central"/>
</dbReference>
<dbReference type="GO" id="GO:0008270">
    <property type="term" value="F:zinc ion binding"/>
    <property type="evidence" value="ECO:0007669"/>
    <property type="project" value="UniProtKB-KW"/>
</dbReference>
<dbReference type="GO" id="GO:0016477">
    <property type="term" value="P:cell migration"/>
    <property type="evidence" value="ECO:0000318"/>
    <property type="project" value="GO_Central"/>
</dbReference>
<dbReference type="GO" id="GO:0045746">
    <property type="term" value="P:negative regulation of Notch signaling pathway"/>
    <property type="evidence" value="ECO:0000316"/>
    <property type="project" value="WormBase"/>
</dbReference>
<dbReference type="GO" id="GO:0040017">
    <property type="term" value="P:positive regulation of locomotion"/>
    <property type="evidence" value="ECO:0000315"/>
    <property type="project" value="UniProtKB"/>
</dbReference>
<dbReference type="GO" id="GO:0110039">
    <property type="term" value="P:positive regulation of nematode male tail tip morphogenesis"/>
    <property type="evidence" value="ECO:0000315"/>
    <property type="project" value="UniProtKB"/>
</dbReference>
<dbReference type="GO" id="GO:0040028">
    <property type="term" value="P:regulation of vulval development"/>
    <property type="evidence" value="ECO:0000316"/>
    <property type="project" value="WormBase"/>
</dbReference>
<dbReference type="GO" id="GO:0007264">
    <property type="term" value="P:small GTPase-mediated signal transduction"/>
    <property type="evidence" value="ECO:0000318"/>
    <property type="project" value="GO_Central"/>
</dbReference>
<dbReference type="CDD" id="cd20810">
    <property type="entry name" value="C1_VAV"/>
    <property type="match status" value="1"/>
</dbReference>
<dbReference type="CDD" id="cd21201">
    <property type="entry name" value="CH_VAV"/>
    <property type="match status" value="1"/>
</dbReference>
<dbReference type="CDD" id="cd01223">
    <property type="entry name" value="PH_Vav"/>
    <property type="match status" value="1"/>
</dbReference>
<dbReference type="CDD" id="cd00160">
    <property type="entry name" value="RhoGEF"/>
    <property type="match status" value="1"/>
</dbReference>
<dbReference type="CDD" id="cd09940">
    <property type="entry name" value="SH2_Vav_family"/>
    <property type="match status" value="1"/>
</dbReference>
<dbReference type="CDD" id="cd00174">
    <property type="entry name" value="SH3"/>
    <property type="match status" value="2"/>
</dbReference>
<dbReference type="Gene3D" id="3.30.60.20">
    <property type="match status" value="1"/>
</dbReference>
<dbReference type="Gene3D" id="1.10.418.10">
    <property type="entry name" value="Calponin-like domain"/>
    <property type="match status" value="1"/>
</dbReference>
<dbReference type="Gene3D" id="1.20.900.10">
    <property type="entry name" value="Dbl homology (DH) domain"/>
    <property type="match status" value="1"/>
</dbReference>
<dbReference type="Gene3D" id="2.30.29.30">
    <property type="entry name" value="Pleckstrin-homology domain (PH domain)/Phosphotyrosine-binding domain (PTB)"/>
    <property type="match status" value="1"/>
</dbReference>
<dbReference type="Gene3D" id="3.30.505.10">
    <property type="entry name" value="SH2 domain"/>
    <property type="match status" value="1"/>
</dbReference>
<dbReference type="Gene3D" id="2.30.30.40">
    <property type="entry name" value="SH3 Domains"/>
    <property type="match status" value="1"/>
</dbReference>
<dbReference type="InterPro" id="IPR046349">
    <property type="entry name" value="C1-like_sf"/>
</dbReference>
<dbReference type="InterPro" id="IPR001715">
    <property type="entry name" value="CH_dom"/>
</dbReference>
<dbReference type="InterPro" id="IPR036872">
    <property type="entry name" value="CH_dom_sf"/>
</dbReference>
<dbReference type="InterPro" id="IPR035899">
    <property type="entry name" value="DBL_dom_sf"/>
</dbReference>
<dbReference type="InterPro" id="IPR000219">
    <property type="entry name" value="DH_dom"/>
</dbReference>
<dbReference type="InterPro" id="IPR001331">
    <property type="entry name" value="GDS_CDC24_CS"/>
</dbReference>
<dbReference type="InterPro" id="IPR002219">
    <property type="entry name" value="PE/DAG-bd"/>
</dbReference>
<dbReference type="InterPro" id="IPR011993">
    <property type="entry name" value="PH-like_dom_sf"/>
</dbReference>
<dbReference type="InterPro" id="IPR001849">
    <property type="entry name" value="PH_domain"/>
</dbReference>
<dbReference type="InterPro" id="IPR037832">
    <property type="entry name" value="PH_Vav"/>
</dbReference>
<dbReference type="InterPro" id="IPR000980">
    <property type="entry name" value="SH2"/>
</dbReference>
<dbReference type="InterPro" id="IPR036860">
    <property type="entry name" value="SH2_dom_sf"/>
</dbReference>
<dbReference type="InterPro" id="IPR036028">
    <property type="entry name" value="SH3-like_dom_sf"/>
</dbReference>
<dbReference type="InterPro" id="IPR001452">
    <property type="entry name" value="SH3_domain"/>
</dbReference>
<dbReference type="InterPro" id="IPR055251">
    <property type="entry name" value="SOS1_NGEF_PH"/>
</dbReference>
<dbReference type="InterPro" id="IPR035031">
    <property type="entry name" value="Vav_SH2_invertebrate"/>
</dbReference>
<dbReference type="PANTHER" id="PTHR45818">
    <property type="entry name" value="PROTEIN VAV"/>
    <property type="match status" value="1"/>
</dbReference>
<dbReference type="PANTHER" id="PTHR45818:SF3">
    <property type="entry name" value="PROTEIN VAV"/>
    <property type="match status" value="1"/>
</dbReference>
<dbReference type="Pfam" id="PF00130">
    <property type="entry name" value="C1_1"/>
    <property type="match status" value="1"/>
</dbReference>
<dbReference type="Pfam" id="PF00307">
    <property type="entry name" value="CH"/>
    <property type="match status" value="1"/>
</dbReference>
<dbReference type="Pfam" id="PF00621">
    <property type="entry name" value="RhoGEF"/>
    <property type="match status" value="1"/>
</dbReference>
<dbReference type="Pfam" id="PF00017">
    <property type="entry name" value="SH2"/>
    <property type="match status" value="1"/>
</dbReference>
<dbReference type="Pfam" id="PF07653">
    <property type="entry name" value="SH3_2"/>
    <property type="match status" value="1"/>
</dbReference>
<dbReference type="Pfam" id="PF22697">
    <property type="entry name" value="SOS1_NGEF_PH"/>
    <property type="match status" value="1"/>
</dbReference>
<dbReference type="PRINTS" id="PR00401">
    <property type="entry name" value="SH2DOMAIN"/>
</dbReference>
<dbReference type="PRINTS" id="PR00452">
    <property type="entry name" value="SH3DOMAIN"/>
</dbReference>
<dbReference type="PRINTS" id="PR01887">
    <property type="entry name" value="SPECTRNALPHA"/>
</dbReference>
<dbReference type="SMART" id="SM00109">
    <property type="entry name" value="C1"/>
    <property type="match status" value="1"/>
</dbReference>
<dbReference type="SMART" id="SM00033">
    <property type="entry name" value="CH"/>
    <property type="match status" value="1"/>
</dbReference>
<dbReference type="SMART" id="SM00233">
    <property type="entry name" value="PH"/>
    <property type="match status" value="1"/>
</dbReference>
<dbReference type="SMART" id="SM00325">
    <property type="entry name" value="RhoGEF"/>
    <property type="match status" value="1"/>
</dbReference>
<dbReference type="SMART" id="SM00252">
    <property type="entry name" value="SH2"/>
    <property type="match status" value="1"/>
</dbReference>
<dbReference type="SMART" id="SM00326">
    <property type="entry name" value="SH3"/>
    <property type="match status" value="1"/>
</dbReference>
<dbReference type="SUPFAM" id="SSF47576">
    <property type="entry name" value="Calponin-homology domain, CH-domain"/>
    <property type="match status" value="1"/>
</dbReference>
<dbReference type="SUPFAM" id="SSF57889">
    <property type="entry name" value="Cysteine-rich domain"/>
    <property type="match status" value="1"/>
</dbReference>
<dbReference type="SUPFAM" id="SSF48065">
    <property type="entry name" value="DBL homology domain (DH-domain)"/>
    <property type="match status" value="1"/>
</dbReference>
<dbReference type="SUPFAM" id="SSF50729">
    <property type="entry name" value="PH domain-like"/>
    <property type="match status" value="1"/>
</dbReference>
<dbReference type="SUPFAM" id="SSF55550">
    <property type="entry name" value="SH2 domain"/>
    <property type="match status" value="1"/>
</dbReference>
<dbReference type="SUPFAM" id="SSF50044">
    <property type="entry name" value="SH3-domain"/>
    <property type="match status" value="2"/>
</dbReference>
<dbReference type="PROSITE" id="PS50021">
    <property type="entry name" value="CH"/>
    <property type="match status" value="1"/>
</dbReference>
<dbReference type="PROSITE" id="PS00741">
    <property type="entry name" value="DH_1"/>
    <property type="match status" value="1"/>
</dbReference>
<dbReference type="PROSITE" id="PS50010">
    <property type="entry name" value="DH_2"/>
    <property type="match status" value="1"/>
</dbReference>
<dbReference type="PROSITE" id="PS50003">
    <property type="entry name" value="PH_DOMAIN"/>
    <property type="match status" value="1"/>
</dbReference>
<dbReference type="PROSITE" id="PS50001">
    <property type="entry name" value="SH2"/>
    <property type="match status" value="1"/>
</dbReference>
<dbReference type="PROSITE" id="PS50002">
    <property type="entry name" value="SH3"/>
    <property type="match status" value="2"/>
</dbReference>
<dbReference type="PROSITE" id="PS00479">
    <property type="entry name" value="ZF_DAG_PE_1"/>
    <property type="match status" value="1"/>
</dbReference>
<dbReference type="PROSITE" id="PS50081">
    <property type="entry name" value="ZF_DAG_PE_2"/>
    <property type="match status" value="1"/>
</dbReference>
<reference key="1">
    <citation type="journal article" date="2005" name="Cell">
        <title>The Rho/Rac family guanine nucleotide exchange factor VAV-1 regulates rhythmic behaviors in Caenorhabditis elegans.</title>
        <authorList>
            <person name="Norman K.R."/>
            <person name="Fazzio R.T."/>
            <person name="Mellem J.E."/>
            <person name="Espelt M.V."/>
            <person name="Strange K."/>
            <person name="Beckerle M.C."/>
            <person name="Maricq A.V."/>
        </authorList>
    </citation>
    <scope>NUCLEOTIDE SEQUENCE [MRNA] (ISOFORM A)</scope>
    <scope>FUNCTION</scope>
    <scope>TISSUE SPECIFICITY</scope>
    <scope>MUTAGENESIS OF TYR-183; TYR-200 AND TYR-217</scope>
</reference>
<reference key="2">
    <citation type="journal article" date="1998" name="Science">
        <title>Genome sequence of the nematode C. elegans: a platform for investigating biology.</title>
        <authorList>
            <consortium name="The C. elegans sequencing consortium"/>
        </authorList>
    </citation>
    <scope>NUCLEOTIDE SEQUENCE [LARGE SCALE GENOMIC DNA]</scope>
    <source>
        <strain>Bristol N2</strain>
    </source>
</reference>
<reference key="3">
    <citation type="journal article" date="2011" name="PLoS Genet.">
        <title>A bow-tie genetic architecture for morphogenesis suggested by a genome-wide RNAi screen in Caenorhabditis elegans.</title>
        <authorList>
            <person name="Nelson M.D."/>
            <person name="Zhou E."/>
            <person name="Kiontke K."/>
            <person name="Fradin H."/>
            <person name="Maldonado G."/>
            <person name="Martin D."/>
            <person name="Shah K."/>
            <person name="Fitch D.H."/>
        </authorList>
    </citation>
    <scope>FUNCTION</scope>
    <scope>DISRUPTION PHENOTYPE</scope>
</reference>
<protein>
    <recommendedName>
        <fullName>Protein vav-1</fullName>
    </recommendedName>
</protein>
<comment type="function">
    <text evidence="9 10">Acts as a guanine nucleotide exchange factor (GEF) for Rho GTPase. Has a critical roles in the generation of rhythmic behaviors: feeding, defecation and ovulation by dynamically regulating the concentration of intracellular calcium. Plays a role in male tail tip morphogenesis (PubMed:21408209).</text>
</comment>
<comment type="alternative products">
    <event type="alternative splicing"/>
    <isoform>
        <id>Q45FX5-1</id>
        <name evidence="12">a</name>
        <sequence type="displayed"/>
    </isoform>
    <isoform>
        <id>Q45FX5-2</id>
        <name evidence="13">b</name>
        <sequence type="described" ref="VSP_018992"/>
    </isoform>
</comment>
<comment type="tissue specificity">
    <text evidence="9">Strong expression in the pharynx, proximal gonad, spermatheca, intestine and rectal epithelia.</text>
</comment>
<comment type="domain">
    <text evidence="1">An acidic domain (AC) contains three highly conserved tyrosines that are involved in the autoinhibition of GEF activity.</text>
</comment>
<comment type="PTM">
    <text>GEF activity is regulated by phosphorylation on tyrosine residues.</text>
</comment>
<comment type="disruption phenotype">
    <text evidence="10">RNAi-mediated knockdown results in male tail tip defects.</text>
</comment>
<comment type="online information" name="Protein Spotlight">
    <link uri="https://www.proteinspotlight.org/back_issues/071"/>
    <text>Nematode tempo - Issue 71 of June 2006</text>
</comment>